<organism>
    <name type="scientific">Solanum lycopersicum</name>
    <name type="common">Tomato</name>
    <name type="synonym">Lycopersicon esculentum</name>
    <dbReference type="NCBI Taxonomy" id="4081"/>
    <lineage>
        <taxon>Eukaryota</taxon>
        <taxon>Viridiplantae</taxon>
        <taxon>Streptophyta</taxon>
        <taxon>Embryophyta</taxon>
        <taxon>Tracheophyta</taxon>
        <taxon>Spermatophyta</taxon>
        <taxon>Magnoliopsida</taxon>
        <taxon>eudicotyledons</taxon>
        <taxon>Gunneridae</taxon>
        <taxon>Pentapetalae</taxon>
        <taxon>asterids</taxon>
        <taxon>lamiids</taxon>
        <taxon>Solanales</taxon>
        <taxon>Solanaceae</taxon>
        <taxon>Solanoideae</taxon>
        <taxon>Solaneae</taxon>
        <taxon>Solanum</taxon>
        <taxon>Solanum subgen. Lycopersicon</taxon>
    </lineage>
</organism>
<accession>Q2MIA0</accession>
<gene>
    <name evidence="1" type="primary">psaA</name>
</gene>
<sequence>MIIRSPEPEVKILVDRDPVKTSFEEWARPGHFSRTIAKGPDTTTWIWNLHADAHDFDSHTSDLEEISRKVFSAHFGQLSIIFLWLSGMYFHGARFSNYEAWLSDPTHIGPSAQVVWPIVGQEILNGDVGGGFRGIQITSGFFQLWRASGITSELQLYCTAIGALVFAALMLFAGWFHYHKAAPKLAWFQDVESMLNHHLAGLLGLGSLSWAGHQVHVSLPINQFLNAGVDPKEIPLPHEFILNRDLLAQLYPSFAEGATPFFTLNWSKYADFLTFRGGLDPVTGGLWLTDIAHHHLAIAILFLIAGHMYRTNWGIGHGLKDILEAHKGPFTGQGHKGLYEILTTSWHAQLSLNLAMLGSLTIVVAHHMYSMPPYPYLATDYGTQLSLFTHHMWIGGFLIVGAAAHAAIFMVRDYDPTTRYNDLLDRVLRHRDAIISHLNWACIFLGFHSFGLYIHNDTMSALGRPQDMFSDTAIQLQPVFAQWIQNTHALAPGATAPGATASTSLTWGGGDLVAVGGKVALLPIPLGTADFLVHHIHAFTIHVTVLILLKGVLFARSSRLIPDKANLGFRFPCDGPGRGGTCQVSAWDHVFLGLFWMYNSISVVIFHFSWKMQSDVWGSVSDQGVVTHITGGNFAQSSITINGWLRDFLWAQASQVIQSYGSSLSAYGLFFLGAHFVWAFSLMFLFSGRGYWQELIESIVWAHNKLKVAPATQPRALSIIQGRAVGVTHYLLGGIATTWAFFLARIIAVG</sequence>
<name>PSAA_SOLLC</name>
<proteinExistence type="inferred from homology"/>
<reference key="1">
    <citation type="journal article" date="2006" name="Theor. Appl. Genet.">
        <title>Complete chloroplast genome sequences of Solanum bulbocastanum, Solanum lycopersicum and comparative analyses with other Solanaceae genomes.</title>
        <authorList>
            <person name="Daniell H."/>
            <person name="Lee S.-B."/>
            <person name="Grevich J."/>
            <person name="Saski C."/>
            <person name="Quesada-Vargas T."/>
            <person name="Guda C."/>
            <person name="Tomkins J."/>
            <person name="Jansen R.K."/>
        </authorList>
    </citation>
    <scope>NUCLEOTIDE SEQUENCE [LARGE SCALE GENOMIC DNA]</scope>
    <source>
        <strain>cv. LA3023</strain>
    </source>
</reference>
<reference key="2">
    <citation type="journal article" date="2006" name="J. Mol. Evol.">
        <title>Sequence of the tomato chloroplast DNA and evolutionary comparison of solanaceous plastid genomes.</title>
        <authorList>
            <person name="Kahlau S."/>
            <person name="Aspinall S."/>
            <person name="Gray J.C."/>
            <person name="Bock R."/>
        </authorList>
    </citation>
    <scope>NUCLEOTIDE SEQUENCE [LARGE SCALE GENOMIC DNA]</scope>
    <source>
        <strain>cv. IPA-6</strain>
    </source>
</reference>
<geneLocation type="chloroplast"/>
<comment type="function">
    <text>PsaA and PsaB bind P700, the primary electron donor of photosystem I (PSI), as well as the electron acceptors A0, A1 and FX. PSI is a plastocyanin-ferredoxin oxidoreductase, converting photonic excitation into a charge separation, which transfers an electron from the donor P700 chlorophyll pair to the spectroscopically characterized acceptors A0, A1, FX, FA and FB in turn. Oxidized P700 is reduced on the lumenal side of the thylakoid membrane by plastocyanin.</text>
</comment>
<comment type="catalytic activity">
    <reaction evidence="1">
        <text>reduced [plastocyanin] + hnu + oxidized [2Fe-2S]-[ferredoxin] = oxidized [plastocyanin] + reduced [2Fe-2S]-[ferredoxin]</text>
        <dbReference type="Rhea" id="RHEA:30407"/>
        <dbReference type="Rhea" id="RHEA-COMP:10000"/>
        <dbReference type="Rhea" id="RHEA-COMP:10001"/>
        <dbReference type="Rhea" id="RHEA-COMP:10039"/>
        <dbReference type="Rhea" id="RHEA-COMP:10040"/>
        <dbReference type="ChEBI" id="CHEBI:29036"/>
        <dbReference type="ChEBI" id="CHEBI:30212"/>
        <dbReference type="ChEBI" id="CHEBI:33737"/>
        <dbReference type="ChEBI" id="CHEBI:33738"/>
        <dbReference type="ChEBI" id="CHEBI:49552"/>
        <dbReference type="EC" id="1.97.1.12"/>
    </reaction>
</comment>
<comment type="cofactor">
    <text evidence="1">P700 is a chlorophyll a/chlorophyll a' dimer, A0 is one or more chlorophyll a, A1 is one or both phylloquinones and FX is a shared 4Fe-4S iron-sulfur center.</text>
</comment>
<comment type="subunit">
    <text evidence="1">The PsaA/B heterodimer binds the P700 chlorophyll special pair and subsequent electron acceptors. PSI consists of a core antenna complex that captures photons, and an electron transfer chain that converts photonic excitation into a charge separation. The eukaryotic PSI reaction center is composed of at least 11 subunits.</text>
</comment>
<comment type="subcellular location">
    <subcellularLocation>
        <location evidence="1">Plastid</location>
        <location evidence="1">Chloroplast thylakoid membrane</location>
        <topology evidence="1">Multi-pass membrane protein</topology>
    </subcellularLocation>
</comment>
<comment type="similarity">
    <text evidence="1">Belongs to the PsaA/PsaB family.</text>
</comment>
<feature type="chain" id="PRO_0000275963" description="Photosystem I P700 chlorophyll a apoprotein A1">
    <location>
        <begin position="1"/>
        <end position="750"/>
    </location>
</feature>
<feature type="transmembrane region" description="Helical; Name=I" evidence="1">
    <location>
        <begin position="70"/>
        <end position="93"/>
    </location>
</feature>
<feature type="transmembrane region" description="Helical; Name=II" evidence="1">
    <location>
        <begin position="156"/>
        <end position="179"/>
    </location>
</feature>
<feature type="transmembrane region" description="Helical; Name=III" evidence="1">
    <location>
        <begin position="195"/>
        <end position="219"/>
    </location>
</feature>
<feature type="transmembrane region" description="Helical; Name=IV" evidence="1">
    <location>
        <begin position="291"/>
        <end position="309"/>
    </location>
</feature>
<feature type="transmembrane region" description="Helical; Name=V" evidence="1">
    <location>
        <begin position="346"/>
        <end position="369"/>
    </location>
</feature>
<feature type="transmembrane region" description="Helical; Name=VI" evidence="1">
    <location>
        <begin position="385"/>
        <end position="411"/>
    </location>
</feature>
<feature type="transmembrane region" description="Helical; Name=VII" evidence="1">
    <location>
        <begin position="433"/>
        <end position="455"/>
    </location>
</feature>
<feature type="transmembrane region" description="Helical; Name=VIII" evidence="1">
    <location>
        <begin position="531"/>
        <end position="549"/>
    </location>
</feature>
<feature type="transmembrane region" description="Helical; Name=IX" evidence="1">
    <location>
        <begin position="589"/>
        <end position="610"/>
    </location>
</feature>
<feature type="transmembrane region" description="Helical; Name=X" evidence="1">
    <location>
        <begin position="664"/>
        <end position="686"/>
    </location>
</feature>
<feature type="transmembrane region" description="Helical; Name=XI" evidence="1">
    <location>
        <begin position="724"/>
        <end position="744"/>
    </location>
</feature>
<feature type="binding site" evidence="1">
    <location>
        <position position="573"/>
    </location>
    <ligand>
        <name>[4Fe-4S] cluster</name>
        <dbReference type="ChEBI" id="CHEBI:49883"/>
        <note>ligand shared between dimeric partners</note>
    </ligand>
</feature>
<feature type="binding site" evidence="1">
    <location>
        <position position="582"/>
    </location>
    <ligand>
        <name>[4Fe-4S] cluster</name>
        <dbReference type="ChEBI" id="CHEBI:49883"/>
        <note>ligand shared between dimeric partners</note>
    </ligand>
</feature>
<feature type="binding site" description="axial binding residue" evidence="1">
    <location>
        <position position="675"/>
    </location>
    <ligand>
        <name>chlorophyll a'</name>
        <dbReference type="ChEBI" id="CHEBI:189419"/>
        <label>A1</label>
    </ligand>
    <ligandPart>
        <name>Mg</name>
        <dbReference type="ChEBI" id="CHEBI:25107"/>
    </ligandPart>
</feature>
<feature type="binding site" description="axial binding residue" evidence="1">
    <location>
        <position position="683"/>
    </location>
    <ligand>
        <name>chlorophyll a</name>
        <dbReference type="ChEBI" id="CHEBI:58416"/>
        <label>A3</label>
    </ligand>
    <ligandPart>
        <name>Mg</name>
        <dbReference type="ChEBI" id="CHEBI:25107"/>
    </ligandPart>
</feature>
<feature type="binding site" evidence="1">
    <location>
        <position position="691"/>
    </location>
    <ligand>
        <name>chlorophyll a</name>
        <dbReference type="ChEBI" id="CHEBI:58416"/>
        <label>A3</label>
    </ligand>
</feature>
<feature type="binding site" evidence="1">
    <location>
        <position position="692"/>
    </location>
    <ligand>
        <name>phylloquinone</name>
        <dbReference type="ChEBI" id="CHEBI:18067"/>
        <label>A</label>
    </ligand>
</feature>
<keyword id="KW-0004">4Fe-4S</keyword>
<keyword id="KW-0148">Chlorophyll</keyword>
<keyword id="KW-0150">Chloroplast</keyword>
<keyword id="KW-0157">Chromophore</keyword>
<keyword id="KW-0249">Electron transport</keyword>
<keyword id="KW-0408">Iron</keyword>
<keyword id="KW-0411">Iron-sulfur</keyword>
<keyword id="KW-0460">Magnesium</keyword>
<keyword id="KW-0472">Membrane</keyword>
<keyword id="KW-0479">Metal-binding</keyword>
<keyword id="KW-0560">Oxidoreductase</keyword>
<keyword id="KW-0602">Photosynthesis</keyword>
<keyword id="KW-0603">Photosystem I</keyword>
<keyword id="KW-0934">Plastid</keyword>
<keyword id="KW-1185">Reference proteome</keyword>
<keyword id="KW-0793">Thylakoid</keyword>
<keyword id="KW-0812">Transmembrane</keyword>
<keyword id="KW-1133">Transmembrane helix</keyword>
<keyword id="KW-0813">Transport</keyword>
<evidence type="ECO:0000255" key="1">
    <source>
        <dbReference type="HAMAP-Rule" id="MF_00458"/>
    </source>
</evidence>
<dbReference type="EC" id="1.97.1.12" evidence="1"/>
<dbReference type="EMBL" id="DQ347959">
    <property type="protein sequence ID" value="ABC56300.1"/>
    <property type="molecule type" value="Genomic_DNA"/>
</dbReference>
<dbReference type="EMBL" id="AM087200">
    <property type="protein sequence ID" value="CAJ32393.1"/>
    <property type="molecule type" value="Genomic_DNA"/>
</dbReference>
<dbReference type="RefSeq" id="AP_004928.1">
    <property type="nucleotide sequence ID" value="AC_000188.1"/>
</dbReference>
<dbReference type="RefSeq" id="YP_008563088.1">
    <property type="nucleotide sequence ID" value="NC_007898.3"/>
</dbReference>
<dbReference type="SMR" id="Q2MIA0"/>
<dbReference type="FunCoup" id="Q2MIA0">
    <property type="interactions" value="288"/>
</dbReference>
<dbReference type="STRING" id="4081.Q2MIA0"/>
<dbReference type="PaxDb" id="4081-Solyc10g052740.1.1"/>
<dbReference type="GeneID" id="3950484"/>
<dbReference type="KEGG" id="sly:3950484"/>
<dbReference type="eggNOG" id="ENOG502QRYE">
    <property type="taxonomic scope" value="Eukaryota"/>
</dbReference>
<dbReference type="InParanoid" id="Q2MIA0"/>
<dbReference type="OrthoDB" id="1252832at2759"/>
<dbReference type="Proteomes" id="UP000004994">
    <property type="component" value="Chloroplast"/>
</dbReference>
<dbReference type="ExpressionAtlas" id="Q2MIA0">
    <property type="expression patterns" value="baseline and differential"/>
</dbReference>
<dbReference type="GO" id="GO:0009535">
    <property type="term" value="C:chloroplast thylakoid membrane"/>
    <property type="evidence" value="ECO:0007669"/>
    <property type="project" value="UniProtKB-SubCell"/>
</dbReference>
<dbReference type="GO" id="GO:0009522">
    <property type="term" value="C:photosystem I"/>
    <property type="evidence" value="ECO:0007669"/>
    <property type="project" value="UniProtKB-KW"/>
</dbReference>
<dbReference type="GO" id="GO:0051539">
    <property type="term" value="F:4 iron, 4 sulfur cluster binding"/>
    <property type="evidence" value="ECO:0007669"/>
    <property type="project" value="UniProtKB-KW"/>
</dbReference>
<dbReference type="GO" id="GO:0016168">
    <property type="term" value="F:chlorophyll binding"/>
    <property type="evidence" value="ECO:0007669"/>
    <property type="project" value="UniProtKB-KW"/>
</dbReference>
<dbReference type="GO" id="GO:0009055">
    <property type="term" value="F:electron transfer activity"/>
    <property type="evidence" value="ECO:0007669"/>
    <property type="project" value="UniProtKB-UniRule"/>
</dbReference>
<dbReference type="GO" id="GO:0000287">
    <property type="term" value="F:magnesium ion binding"/>
    <property type="evidence" value="ECO:0007669"/>
    <property type="project" value="UniProtKB-UniRule"/>
</dbReference>
<dbReference type="GO" id="GO:0016491">
    <property type="term" value="F:oxidoreductase activity"/>
    <property type="evidence" value="ECO:0007669"/>
    <property type="project" value="UniProtKB-KW"/>
</dbReference>
<dbReference type="GO" id="GO:0015979">
    <property type="term" value="P:photosynthesis"/>
    <property type="evidence" value="ECO:0007669"/>
    <property type="project" value="UniProtKB-UniRule"/>
</dbReference>
<dbReference type="FunFam" id="1.20.1130.10:FF:000001">
    <property type="entry name" value="Photosystem I P700 chlorophyll a apoprotein A2"/>
    <property type="match status" value="1"/>
</dbReference>
<dbReference type="Gene3D" id="1.20.1130.10">
    <property type="entry name" value="Photosystem I PsaA/PsaB"/>
    <property type="match status" value="1"/>
</dbReference>
<dbReference type="HAMAP" id="MF_00458">
    <property type="entry name" value="PSI_PsaA"/>
    <property type="match status" value="1"/>
</dbReference>
<dbReference type="InterPro" id="IPR006243">
    <property type="entry name" value="PSI_PsaA"/>
</dbReference>
<dbReference type="InterPro" id="IPR001280">
    <property type="entry name" value="PSI_PsaA/B"/>
</dbReference>
<dbReference type="InterPro" id="IPR020586">
    <property type="entry name" value="PSI_PsaA/B_CS"/>
</dbReference>
<dbReference type="InterPro" id="IPR036408">
    <property type="entry name" value="PSI_PsaA/B_sf"/>
</dbReference>
<dbReference type="NCBIfam" id="TIGR01335">
    <property type="entry name" value="psaA"/>
    <property type="match status" value="1"/>
</dbReference>
<dbReference type="PANTHER" id="PTHR30128">
    <property type="entry name" value="OUTER MEMBRANE PROTEIN, OMPA-RELATED"/>
    <property type="match status" value="1"/>
</dbReference>
<dbReference type="PANTHER" id="PTHR30128:SF19">
    <property type="entry name" value="PHOTOSYSTEM I P700 CHLOROPHYLL A APOPROTEIN A1-RELATED"/>
    <property type="match status" value="1"/>
</dbReference>
<dbReference type="Pfam" id="PF00223">
    <property type="entry name" value="PsaA_PsaB"/>
    <property type="match status" value="1"/>
</dbReference>
<dbReference type="PIRSF" id="PIRSF002905">
    <property type="entry name" value="PSI_A"/>
    <property type="match status" value="1"/>
</dbReference>
<dbReference type="PRINTS" id="PR00257">
    <property type="entry name" value="PHOTSYSPSAAB"/>
</dbReference>
<dbReference type="SUPFAM" id="SSF81558">
    <property type="entry name" value="Photosystem I subunits PsaA/PsaB"/>
    <property type="match status" value="1"/>
</dbReference>
<dbReference type="PROSITE" id="PS00419">
    <property type="entry name" value="PHOTOSYSTEM_I_PSAAB"/>
    <property type="match status" value="1"/>
</dbReference>
<protein>
    <recommendedName>
        <fullName evidence="1">Photosystem I P700 chlorophyll a apoprotein A1</fullName>
        <ecNumber evidence="1">1.97.1.12</ecNumber>
    </recommendedName>
    <alternativeName>
        <fullName evidence="1">PSI-A</fullName>
    </alternativeName>
    <alternativeName>
        <fullName evidence="1">PsaA</fullName>
    </alternativeName>
</protein>